<keyword id="KW-0067">ATP-binding</keyword>
<keyword id="KW-0418">Kinase</keyword>
<keyword id="KW-0545">Nucleotide biosynthesis</keyword>
<keyword id="KW-0547">Nucleotide-binding</keyword>
<keyword id="KW-1185">Reference proteome</keyword>
<keyword id="KW-0808">Transferase</keyword>
<gene>
    <name type="ordered locus">SCO0782</name>
    <name type="ORF">3SCF60.14c</name>
</gene>
<accession>Q9EWS0</accession>
<feature type="chain" id="PRO_0000141232" description="Putative ribose-phosphate pyrophosphokinase">
    <location>
        <begin position="1"/>
        <end position="317"/>
    </location>
</feature>
<feature type="region of interest" description="Binding of phosphoribosylpyrophosphate" evidence="1">
    <location>
        <begin position="211"/>
        <end position="224"/>
    </location>
</feature>
<sequence length="317" mass="33959">MRDIAVFSGSAHPDLAEEVCAQLGVPLSPTRVSRFANDCLEVQLMANCRERDVFLVQPLVTPVQEHLVELLMMCDAARGASAGRITVVMPHYSYARSDKKDAPRISLGGRLVADLLVAAGASRVLAMTLHSPQVHGFFSVPVDHLHALRELAAHFRQYDLSRATVVSPDLGNAKEAAAFARMLGAQVAAGAKQRYADDRVSISSVIGDVAGRDVIVLDDEIAKGSTVLELLDRLRESGPRTIRLACTHGLFAAGALGRLSEQPDVLEIVCTNTVPVPADDHTDKLRILSIAPALAEAVRRIHNGESVSALFDARPAG</sequence>
<comment type="catalytic activity">
    <reaction>
        <text>D-ribose 5-phosphate + ATP = 5-phospho-alpha-D-ribose 1-diphosphate + AMP + H(+)</text>
        <dbReference type="Rhea" id="RHEA:15609"/>
        <dbReference type="ChEBI" id="CHEBI:15378"/>
        <dbReference type="ChEBI" id="CHEBI:30616"/>
        <dbReference type="ChEBI" id="CHEBI:58017"/>
        <dbReference type="ChEBI" id="CHEBI:78346"/>
        <dbReference type="ChEBI" id="CHEBI:456215"/>
        <dbReference type="EC" id="2.7.6.1"/>
    </reaction>
</comment>
<comment type="similarity">
    <text evidence="2">Belongs to the ribose-phosphate pyrophosphokinase family.</text>
</comment>
<comment type="caution">
    <text evidence="2">This protein has lost two of the potential magnesium binding sites found in 5-phosphoribose 1-diphosphate synthases. It is also divergent from other prokaryotic member of the family. It may therefore have acquired another function.</text>
</comment>
<reference key="1">
    <citation type="journal article" date="2002" name="Nature">
        <title>Complete genome sequence of the model actinomycete Streptomyces coelicolor A3(2).</title>
        <authorList>
            <person name="Bentley S.D."/>
            <person name="Chater K.F."/>
            <person name="Cerdeno-Tarraga A.-M."/>
            <person name="Challis G.L."/>
            <person name="Thomson N.R."/>
            <person name="James K.D."/>
            <person name="Harris D.E."/>
            <person name="Quail M.A."/>
            <person name="Kieser H."/>
            <person name="Harper D."/>
            <person name="Bateman A."/>
            <person name="Brown S."/>
            <person name="Chandra G."/>
            <person name="Chen C.W."/>
            <person name="Collins M."/>
            <person name="Cronin A."/>
            <person name="Fraser A."/>
            <person name="Goble A."/>
            <person name="Hidalgo J."/>
            <person name="Hornsby T."/>
            <person name="Howarth S."/>
            <person name="Huang C.-H."/>
            <person name="Kieser T."/>
            <person name="Larke L."/>
            <person name="Murphy L.D."/>
            <person name="Oliver K."/>
            <person name="O'Neil S."/>
            <person name="Rabbinowitsch E."/>
            <person name="Rajandream M.A."/>
            <person name="Rutherford K.M."/>
            <person name="Rutter S."/>
            <person name="Seeger K."/>
            <person name="Saunders D."/>
            <person name="Sharp S."/>
            <person name="Squares R."/>
            <person name="Squares S."/>
            <person name="Taylor K."/>
            <person name="Warren T."/>
            <person name="Wietzorrek A."/>
            <person name="Woodward J.R."/>
            <person name="Barrell B.G."/>
            <person name="Parkhill J."/>
            <person name="Hopwood D.A."/>
        </authorList>
    </citation>
    <scope>NUCLEOTIDE SEQUENCE [LARGE SCALE GENOMIC DNA]</scope>
    <source>
        <strain>ATCC BAA-471 / A3(2) / M145</strain>
    </source>
</reference>
<organism>
    <name type="scientific">Streptomyces coelicolor (strain ATCC BAA-471 / A3(2) / M145)</name>
    <dbReference type="NCBI Taxonomy" id="100226"/>
    <lineage>
        <taxon>Bacteria</taxon>
        <taxon>Bacillati</taxon>
        <taxon>Actinomycetota</taxon>
        <taxon>Actinomycetes</taxon>
        <taxon>Kitasatosporales</taxon>
        <taxon>Streptomycetaceae</taxon>
        <taxon>Streptomyces</taxon>
        <taxon>Streptomyces albidoflavus group</taxon>
    </lineage>
</organism>
<protein>
    <recommendedName>
        <fullName>Putative ribose-phosphate pyrophosphokinase</fullName>
        <shortName>RPPK</shortName>
        <ecNumber>2.7.6.1</ecNumber>
    </recommendedName>
    <alternativeName>
        <fullName>5-phospho-D-ribosyl alpha-1-diphosphate synthase</fullName>
        <shortName>P-Rib-PP synthase</shortName>
        <shortName>PRPP synthase</shortName>
    </alternativeName>
</protein>
<name>KPRH_STRCO</name>
<dbReference type="EC" id="2.7.6.1"/>
<dbReference type="EMBL" id="AL939106">
    <property type="protein sequence ID" value="CAC14347.1"/>
    <property type="molecule type" value="Genomic_DNA"/>
</dbReference>
<dbReference type="RefSeq" id="NP_625084.1">
    <property type="nucleotide sequence ID" value="NC_003888.3"/>
</dbReference>
<dbReference type="RefSeq" id="WP_011027351.1">
    <property type="nucleotide sequence ID" value="NZ_VNID01000004.1"/>
</dbReference>
<dbReference type="SMR" id="Q9EWS0"/>
<dbReference type="STRING" id="100226.gene:17758365"/>
<dbReference type="PaxDb" id="100226-SCO0782"/>
<dbReference type="KEGG" id="sco:SCO0782"/>
<dbReference type="PATRIC" id="fig|100226.15.peg.774"/>
<dbReference type="eggNOG" id="COG0462">
    <property type="taxonomic scope" value="Bacteria"/>
</dbReference>
<dbReference type="HOGENOM" id="CLU_033546_2_0_11"/>
<dbReference type="InParanoid" id="Q9EWS0"/>
<dbReference type="OrthoDB" id="9777067at2"/>
<dbReference type="PhylomeDB" id="Q9EWS0"/>
<dbReference type="Proteomes" id="UP000001973">
    <property type="component" value="Chromosome"/>
</dbReference>
<dbReference type="GO" id="GO:0005737">
    <property type="term" value="C:cytoplasm"/>
    <property type="evidence" value="ECO:0000318"/>
    <property type="project" value="GO_Central"/>
</dbReference>
<dbReference type="GO" id="GO:0002189">
    <property type="term" value="C:ribose phosphate diphosphokinase complex"/>
    <property type="evidence" value="ECO:0000318"/>
    <property type="project" value="GO_Central"/>
</dbReference>
<dbReference type="GO" id="GO:0005524">
    <property type="term" value="F:ATP binding"/>
    <property type="evidence" value="ECO:0007669"/>
    <property type="project" value="UniProtKB-KW"/>
</dbReference>
<dbReference type="GO" id="GO:0016301">
    <property type="term" value="F:kinase activity"/>
    <property type="evidence" value="ECO:0007669"/>
    <property type="project" value="UniProtKB-KW"/>
</dbReference>
<dbReference type="GO" id="GO:0000287">
    <property type="term" value="F:magnesium ion binding"/>
    <property type="evidence" value="ECO:0007669"/>
    <property type="project" value="InterPro"/>
</dbReference>
<dbReference type="GO" id="GO:0004749">
    <property type="term" value="F:ribose phosphate diphosphokinase activity"/>
    <property type="evidence" value="ECO:0000318"/>
    <property type="project" value="GO_Central"/>
</dbReference>
<dbReference type="GO" id="GO:0006015">
    <property type="term" value="P:5-phosphoribose 1-diphosphate biosynthetic process"/>
    <property type="evidence" value="ECO:0000318"/>
    <property type="project" value="GO_Central"/>
</dbReference>
<dbReference type="GO" id="GO:0006164">
    <property type="term" value="P:purine nucleotide biosynthetic process"/>
    <property type="evidence" value="ECO:0000318"/>
    <property type="project" value="GO_Central"/>
</dbReference>
<dbReference type="CDD" id="cd06223">
    <property type="entry name" value="PRTases_typeI"/>
    <property type="match status" value="1"/>
</dbReference>
<dbReference type="FunFam" id="3.40.50.2020:FF:000055">
    <property type="entry name" value="Ribose-phosphate pyrophosphokinase"/>
    <property type="match status" value="1"/>
</dbReference>
<dbReference type="Gene3D" id="3.40.50.2020">
    <property type="match status" value="2"/>
</dbReference>
<dbReference type="InterPro" id="IPR029099">
    <property type="entry name" value="Pribosyltran_N"/>
</dbReference>
<dbReference type="InterPro" id="IPR000836">
    <property type="entry name" value="PRibTrfase_dom"/>
</dbReference>
<dbReference type="InterPro" id="IPR029057">
    <property type="entry name" value="PRTase-like"/>
</dbReference>
<dbReference type="InterPro" id="IPR005946">
    <property type="entry name" value="Rib-P_diPkinase"/>
</dbReference>
<dbReference type="NCBIfam" id="NF002320">
    <property type="entry name" value="PRK01259.1"/>
    <property type="match status" value="1"/>
</dbReference>
<dbReference type="NCBIfam" id="TIGR01251">
    <property type="entry name" value="ribP_PPkin"/>
    <property type="match status" value="1"/>
</dbReference>
<dbReference type="PANTHER" id="PTHR10210">
    <property type="entry name" value="RIBOSE-PHOSPHATE DIPHOSPHOKINASE FAMILY MEMBER"/>
    <property type="match status" value="1"/>
</dbReference>
<dbReference type="PANTHER" id="PTHR10210:SF32">
    <property type="entry name" value="RIBOSE-PHOSPHATE PYROPHOSPHOKINASE 2"/>
    <property type="match status" value="1"/>
</dbReference>
<dbReference type="Pfam" id="PF14572">
    <property type="entry name" value="Pribosyl_synth"/>
    <property type="match status" value="1"/>
</dbReference>
<dbReference type="Pfam" id="PF13793">
    <property type="entry name" value="Pribosyltran_N"/>
    <property type="match status" value="1"/>
</dbReference>
<dbReference type="SMART" id="SM01400">
    <property type="entry name" value="Pribosyltran_N"/>
    <property type="match status" value="1"/>
</dbReference>
<dbReference type="SUPFAM" id="SSF53271">
    <property type="entry name" value="PRTase-like"/>
    <property type="match status" value="1"/>
</dbReference>
<proteinExistence type="inferred from homology"/>
<evidence type="ECO:0000255" key="1"/>
<evidence type="ECO:0000305" key="2"/>